<organism>
    <name type="scientific">Pyrococcus horikoshii (strain ATCC 700860 / DSM 12428 / JCM 9974 / NBRC 100139 / OT-3)</name>
    <dbReference type="NCBI Taxonomy" id="70601"/>
    <lineage>
        <taxon>Archaea</taxon>
        <taxon>Methanobacteriati</taxon>
        <taxon>Methanobacteriota</taxon>
        <taxon>Thermococci</taxon>
        <taxon>Thermococcales</taxon>
        <taxon>Thermococcaceae</taxon>
        <taxon>Pyrococcus</taxon>
    </lineage>
</organism>
<keyword id="KW-0002">3D-structure</keyword>
<keyword id="KW-1003">Cell membrane</keyword>
<keyword id="KW-0472">Membrane</keyword>
<keyword id="KW-0479">Metal-binding</keyword>
<keyword id="KW-0500">Molybdenum</keyword>
<keyword id="KW-0732">Signal</keyword>
<keyword id="KW-0813">Transport</keyword>
<protein>
    <recommendedName>
        <fullName>Molybdate/tungstate-binding protein WtpA</fullName>
    </recommendedName>
</protein>
<proteinExistence type="evidence at protein level"/>
<name>WTPA_PYRHO</name>
<dbReference type="EMBL" id="BA000001">
    <property type="protein sequence ID" value="BAA29220.1"/>
    <property type="molecule type" value="Genomic_DNA"/>
</dbReference>
<dbReference type="PIR" id="E71236">
    <property type="entry name" value="E71236"/>
</dbReference>
<dbReference type="RefSeq" id="WP_010884262.1">
    <property type="nucleotide sequence ID" value="NC_000961.1"/>
</dbReference>
<dbReference type="PDB" id="3CG3">
    <property type="method" value="X-ray"/>
    <property type="resolution" value="1.80 A"/>
    <property type="chains" value="A=23-339"/>
</dbReference>
<dbReference type="PDBsum" id="3CG3"/>
<dbReference type="SMR" id="O57890"/>
<dbReference type="STRING" id="70601.gene:9377061"/>
<dbReference type="EnsemblBacteria" id="BAA29220">
    <property type="protein sequence ID" value="BAA29220"/>
    <property type="gene ID" value="BAA29220"/>
</dbReference>
<dbReference type="GeneID" id="1444044"/>
<dbReference type="KEGG" id="pho:PH0151"/>
<dbReference type="eggNOG" id="arCOG00219">
    <property type="taxonomic scope" value="Archaea"/>
</dbReference>
<dbReference type="OrthoDB" id="7820at2157"/>
<dbReference type="EvolutionaryTrace" id="O57890"/>
<dbReference type="Proteomes" id="UP000000752">
    <property type="component" value="Chromosome"/>
</dbReference>
<dbReference type="GO" id="GO:0005886">
    <property type="term" value="C:plasma membrane"/>
    <property type="evidence" value="ECO:0007669"/>
    <property type="project" value="UniProtKB-SubCell"/>
</dbReference>
<dbReference type="GO" id="GO:0046872">
    <property type="term" value="F:metal ion binding"/>
    <property type="evidence" value="ECO:0007669"/>
    <property type="project" value="UniProtKB-KW"/>
</dbReference>
<dbReference type="GO" id="GO:0030973">
    <property type="term" value="F:molybdate ion binding"/>
    <property type="evidence" value="ECO:0007669"/>
    <property type="project" value="TreeGrafter"/>
</dbReference>
<dbReference type="GO" id="GO:1901359">
    <property type="term" value="F:tungstate binding"/>
    <property type="evidence" value="ECO:0007669"/>
    <property type="project" value="InterPro"/>
</dbReference>
<dbReference type="GO" id="GO:0015689">
    <property type="term" value="P:molybdate ion transport"/>
    <property type="evidence" value="ECO:0007669"/>
    <property type="project" value="TreeGrafter"/>
</dbReference>
<dbReference type="CDD" id="cd13540">
    <property type="entry name" value="PBP2_ModA_WtpA"/>
    <property type="match status" value="1"/>
</dbReference>
<dbReference type="FunFam" id="3.40.190.10:FF:000440">
    <property type="entry name" value="Uncharacterized solute-binding protein MA_0280"/>
    <property type="match status" value="1"/>
</dbReference>
<dbReference type="Gene3D" id="3.40.190.10">
    <property type="entry name" value="Periplasmic binding protein-like II"/>
    <property type="match status" value="2"/>
</dbReference>
<dbReference type="InterPro" id="IPR022498">
    <property type="entry name" value="ABC_trnspt_W-bd_WtpA"/>
</dbReference>
<dbReference type="InterPro" id="IPR050682">
    <property type="entry name" value="ModA/WtpA"/>
</dbReference>
<dbReference type="NCBIfam" id="NF003196">
    <property type="entry name" value="PRK04168.1"/>
    <property type="match status" value="1"/>
</dbReference>
<dbReference type="NCBIfam" id="TIGR03730">
    <property type="entry name" value="tungstate_WtpA"/>
    <property type="match status" value="1"/>
</dbReference>
<dbReference type="PANTHER" id="PTHR30632">
    <property type="entry name" value="MOLYBDATE-BINDING PERIPLASMIC PROTEIN"/>
    <property type="match status" value="1"/>
</dbReference>
<dbReference type="PANTHER" id="PTHR30632:SF16">
    <property type="entry name" value="MOLYBDATE_TUNGSTATE-BINDING PROTEIN WTPA"/>
    <property type="match status" value="1"/>
</dbReference>
<dbReference type="Pfam" id="PF13531">
    <property type="entry name" value="SBP_bac_11"/>
    <property type="match status" value="1"/>
</dbReference>
<dbReference type="SUPFAM" id="SSF53850">
    <property type="entry name" value="Periplasmic binding protein-like II"/>
    <property type="match status" value="1"/>
</dbReference>
<dbReference type="PROSITE" id="PS51257">
    <property type="entry name" value="PROKAR_LIPOPROTEIN"/>
    <property type="match status" value="1"/>
</dbReference>
<reference key="1">
    <citation type="journal article" date="1998" name="DNA Res.">
        <title>Complete sequence and gene organization of the genome of a hyper-thermophilic archaebacterium, Pyrococcus horikoshii OT3.</title>
        <authorList>
            <person name="Kawarabayasi Y."/>
            <person name="Sawada M."/>
            <person name="Horikawa H."/>
            <person name="Haikawa Y."/>
            <person name="Hino Y."/>
            <person name="Yamamoto S."/>
            <person name="Sekine M."/>
            <person name="Baba S."/>
            <person name="Kosugi H."/>
            <person name="Hosoyama A."/>
            <person name="Nagai Y."/>
            <person name="Sakai M."/>
            <person name="Ogura K."/>
            <person name="Otsuka R."/>
            <person name="Nakazawa H."/>
            <person name="Takamiya M."/>
            <person name="Ohfuku Y."/>
            <person name="Funahashi T."/>
            <person name="Tanaka T."/>
            <person name="Kudoh Y."/>
            <person name="Yamazaki J."/>
            <person name="Kushida N."/>
            <person name="Oguchi A."/>
            <person name="Aoki K."/>
            <person name="Yoshizawa T."/>
            <person name="Nakamura Y."/>
            <person name="Robb F.T."/>
            <person name="Horikoshi K."/>
            <person name="Masuchi Y."/>
            <person name="Shizuya H."/>
            <person name="Kikuchi H."/>
        </authorList>
    </citation>
    <scope>NUCLEOTIDE SEQUENCE [LARGE SCALE GENOMIC DNA]</scope>
    <source>
        <strain>ATCC 700860 / DSM 12428 / JCM 9974 / NBRC 100139 / OT-3</strain>
    </source>
</reference>
<sequence length="340" mass="38545">MRKVIPILGILLLSFIILGCLGSESREARLIIFHAGSLSIPLSQVEEKFTKYAQEKLGVKVTFQDEASGSVKAVRKVTDLKKRADIVAVADYTLIPQLMIPNYTDFYVLFATNEIVIAFTNKSKYADEMLKNPDKWYEILSRPDVSFGFSDPNQDPCGYRSVMVMKLAELYYGRPIFKELVEKTTNIYSNGTRIYAPKEIIIKDKRVIMRPKETDLVGLVESGSLDYIFIYKSVAKQHHLSYITLPDDINLGDFNKADFYGRVSITLGSTGKTIKAKPIVYGITVLKNAPNRELAIEFLRFLLGNEGRKIFEDNYQEFLSPPVAFGNVPPEIRRLVEVKD</sequence>
<comment type="function">
    <text evidence="1">Part of the ABC transporter complex WtpABC involved in molybdate/tungstate import. Binds tungstate and molybdate (By similarity).</text>
</comment>
<comment type="subunit">
    <text evidence="1">The complex is composed of two ATP-binding proteins (WtpC), two transmembrane proteins (WtpB) and a solute-binding protein (WtpA).</text>
</comment>
<comment type="subcellular location">
    <subcellularLocation>
        <location evidence="3">Cell membrane</location>
        <topology evidence="1">Peripheral membrane protein</topology>
    </subcellularLocation>
</comment>
<comment type="similarity">
    <text evidence="4">Belongs to the bacterial solute-binding protein 1 family. WtpA subfamily.</text>
</comment>
<evidence type="ECO:0000250" key="1"/>
<evidence type="ECO:0000250" key="2">
    <source>
        <dbReference type="UniProtKB" id="O30142"/>
    </source>
</evidence>
<evidence type="ECO:0000255" key="3">
    <source>
        <dbReference type="PROSITE-ProRule" id="PRU00303"/>
    </source>
</evidence>
<evidence type="ECO:0000305" key="4"/>
<evidence type="ECO:0007829" key="5">
    <source>
        <dbReference type="PDB" id="3CG3"/>
    </source>
</evidence>
<gene>
    <name type="primary">wtpA</name>
    <name type="ordered locus">PH0151</name>
</gene>
<accession>O57890</accession>
<feature type="signal peptide" evidence="3">
    <location>
        <begin position="1"/>
        <end position="22"/>
    </location>
</feature>
<feature type="chain" id="PRO_0000159724" description="Molybdate/tungstate-binding protein WtpA">
    <location>
        <begin position="23"/>
        <end position="340"/>
    </location>
</feature>
<feature type="binding site" evidence="2">
    <location>
        <begin position="36"/>
        <end position="37"/>
    </location>
    <ligand>
        <name>molybdate</name>
        <dbReference type="ChEBI" id="CHEBI:36264"/>
    </ligand>
</feature>
<feature type="binding site" evidence="2">
    <location>
        <begin position="36"/>
        <end position="37"/>
    </location>
    <ligand>
        <name>tungstate</name>
        <dbReference type="ChEBI" id="CHEBI:46502"/>
    </ligand>
</feature>
<feature type="binding site" evidence="2">
    <location>
        <position position="70"/>
    </location>
    <ligand>
        <name>molybdate</name>
        <dbReference type="ChEBI" id="CHEBI:36264"/>
    </ligand>
</feature>
<feature type="binding site" evidence="2">
    <location>
        <position position="70"/>
    </location>
    <ligand>
        <name>tungstate</name>
        <dbReference type="ChEBI" id="CHEBI:46502"/>
    </ligand>
</feature>
<feature type="binding site" evidence="2">
    <location>
        <begin position="155"/>
        <end position="157"/>
    </location>
    <ligand>
        <name>molybdate</name>
        <dbReference type="ChEBI" id="CHEBI:36264"/>
    </ligand>
</feature>
<feature type="binding site" evidence="2">
    <location>
        <begin position="155"/>
        <end position="157"/>
    </location>
    <ligand>
        <name>tungstate</name>
        <dbReference type="ChEBI" id="CHEBI:46502"/>
    </ligand>
</feature>
<feature type="binding site" evidence="2">
    <location>
        <position position="213"/>
    </location>
    <ligand>
        <name>molybdate</name>
        <dbReference type="ChEBI" id="CHEBI:36264"/>
    </ligand>
</feature>
<feature type="binding site" evidence="2">
    <location>
        <position position="213"/>
    </location>
    <ligand>
        <name>tungstate</name>
        <dbReference type="ChEBI" id="CHEBI:46502"/>
    </ligand>
</feature>
<feature type="binding site" evidence="2">
    <location>
        <position position="231"/>
    </location>
    <ligand>
        <name>molybdate</name>
        <dbReference type="ChEBI" id="CHEBI:36264"/>
    </ligand>
</feature>
<feature type="binding site" evidence="2">
    <location>
        <position position="231"/>
    </location>
    <ligand>
        <name>tungstate</name>
        <dbReference type="ChEBI" id="CHEBI:46502"/>
    </ligand>
</feature>
<feature type="strand" evidence="5">
    <location>
        <begin position="27"/>
        <end position="35"/>
    </location>
</feature>
<feature type="helix" evidence="5">
    <location>
        <begin position="36"/>
        <end position="38"/>
    </location>
</feature>
<feature type="helix" evidence="5">
    <location>
        <begin position="39"/>
        <end position="57"/>
    </location>
</feature>
<feature type="strand" evidence="5">
    <location>
        <begin position="60"/>
        <end position="68"/>
    </location>
</feature>
<feature type="helix" evidence="5">
    <location>
        <begin position="70"/>
        <end position="78"/>
    </location>
</feature>
<feature type="strand" evidence="5">
    <location>
        <begin position="85"/>
        <end position="91"/>
    </location>
</feature>
<feature type="helix" evidence="5">
    <location>
        <begin position="94"/>
        <end position="98"/>
    </location>
</feature>
<feature type="turn" evidence="5">
    <location>
        <begin position="99"/>
        <end position="103"/>
    </location>
</feature>
<feature type="strand" evidence="5">
    <location>
        <begin position="105"/>
        <end position="112"/>
    </location>
</feature>
<feature type="strand" evidence="5">
    <location>
        <begin position="115"/>
        <end position="119"/>
    </location>
</feature>
<feature type="helix" evidence="5">
    <location>
        <begin position="126"/>
        <end position="131"/>
    </location>
</feature>
<feature type="helix" evidence="5">
    <location>
        <begin position="133"/>
        <end position="135"/>
    </location>
</feature>
<feature type="helix" evidence="5">
    <location>
        <begin position="136"/>
        <end position="139"/>
    </location>
</feature>
<feature type="strand" evidence="5">
    <location>
        <begin position="147"/>
        <end position="150"/>
    </location>
</feature>
<feature type="turn" evidence="5">
    <location>
        <begin position="152"/>
        <end position="154"/>
    </location>
</feature>
<feature type="helix" evidence="5">
    <location>
        <begin position="156"/>
        <end position="172"/>
    </location>
</feature>
<feature type="helix" evidence="5">
    <location>
        <begin position="176"/>
        <end position="180"/>
    </location>
</feature>
<feature type="turn" evidence="5">
    <location>
        <begin position="181"/>
        <end position="184"/>
    </location>
</feature>
<feature type="strand" evidence="5">
    <location>
        <begin position="188"/>
        <end position="190"/>
    </location>
</feature>
<feature type="strand" evidence="5">
    <location>
        <begin position="193"/>
        <end position="196"/>
    </location>
</feature>
<feature type="strand" evidence="5">
    <location>
        <begin position="202"/>
        <end position="204"/>
    </location>
</feature>
<feature type="strand" evidence="5">
    <location>
        <begin position="207"/>
        <end position="212"/>
    </location>
</feature>
<feature type="helix" evidence="5">
    <location>
        <begin position="214"/>
        <end position="221"/>
    </location>
</feature>
<feature type="strand" evidence="5">
    <location>
        <begin position="227"/>
        <end position="231"/>
    </location>
</feature>
<feature type="helix" evidence="5">
    <location>
        <begin position="232"/>
        <end position="237"/>
    </location>
</feature>
<feature type="strand" evidence="5">
    <location>
        <begin position="241"/>
        <end position="244"/>
    </location>
</feature>
<feature type="turn" evidence="5">
    <location>
        <begin position="247"/>
        <end position="249"/>
    </location>
</feature>
<feature type="helix" evidence="5">
    <location>
        <begin position="254"/>
        <end position="256"/>
    </location>
</feature>
<feature type="helix" evidence="5">
    <location>
        <begin position="257"/>
        <end position="260"/>
    </location>
</feature>
<feature type="strand" evidence="5">
    <location>
        <begin position="264"/>
        <end position="267"/>
    </location>
</feature>
<feature type="turn" evidence="5">
    <location>
        <begin position="268"/>
        <end position="270"/>
    </location>
</feature>
<feature type="strand" evidence="5">
    <location>
        <begin position="273"/>
        <end position="275"/>
    </location>
</feature>
<feature type="strand" evidence="5">
    <location>
        <begin position="280"/>
        <end position="285"/>
    </location>
</feature>
<feature type="helix" evidence="5">
    <location>
        <begin position="292"/>
        <end position="303"/>
    </location>
</feature>
<feature type="helix" evidence="5">
    <location>
        <begin position="305"/>
        <end position="313"/>
    </location>
</feature>
<feature type="strand" evidence="5">
    <location>
        <begin position="318"/>
        <end position="327"/>
    </location>
</feature>
<feature type="helix" evidence="5">
    <location>
        <begin position="330"/>
        <end position="332"/>
    </location>
</feature>
<feature type="turn" evidence="5">
    <location>
        <begin position="333"/>
        <end position="335"/>
    </location>
</feature>
<feature type="strand" evidence="5">
    <location>
        <begin position="336"/>
        <end position="338"/>
    </location>
</feature>